<comment type="subcellular location">
    <subcellularLocation>
        <location evidence="1">Secreted</location>
        <location evidence="1">Cell wall</location>
    </subcellularLocation>
</comment>
<reference evidence="3" key="1">
    <citation type="journal article" date="2009" name="J. Plant Physiol.">
        <title>Analysis of the soluble cell wall proteome of gymnosperms.</title>
        <authorList>
            <person name="Uzal E.N."/>
            <person name="Gomez-Ros L.V."/>
            <person name="Hernandez J.A."/>
            <person name="Pedreno M.A."/>
            <person name="Cuello J."/>
            <person name="Ros Barcelo A."/>
        </authorList>
    </citation>
    <scope>PROTEIN SEQUENCE</scope>
    <scope>SUBCELLULAR LOCATION</scope>
    <source>
        <tissue evidence="1">Callus</tissue>
    </source>
</reference>
<organism>
    <name type="scientific">Cycas revoluta</name>
    <name type="common">Sago palm</name>
    <dbReference type="NCBI Taxonomy" id="3396"/>
    <lineage>
        <taxon>Eukaryota</taxon>
        <taxon>Viridiplantae</taxon>
        <taxon>Streptophyta</taxon>
        <taxon>Embryophyta</taxon>
        <taxon>Tracheophyta</taxon>
        <taxon>Spermatophyta</taxon>
        <taxon>Cycadidae</taxon>
        <taxon>Cycadales</taxon>
        <taxon>Cycadaceae</taxon>
        <taxon>Cycas</taxon>
    </lineage>
</organism>
<keyword id="KW-0134">Cell wall</keyword>
<keyword id="KW-0903">Direct protein sequencing</keyword>
<keyword id="KW-0964">Secreted</keyword>
<feature type="chain" id="PRO_0000318122" description="Unknown protein 1">
    <location>
        <begin position="1" status="less than"/>
        <end position="9" status="greater than"/>
    </location>
</feature>
<feature type="unsure residue" description="L or I" evidence="1">
    <location>
        <position position="4"/>
    </location>
</feature>
<feature type="unsure residue" description="L or I" evidence="1">
    <location>
        <position position="6"/>
    </location>
</feature>
<feature type="unsure residue" description="K or Q" evidence="1">
    <location>
        <position position="9"/>
    </location>
</feature>
<feature type="non-terminal residue" evidence="2">
    <location>
        <position position="1"/>
    </location>
</feature>
<feature type="non-terminal residue" evidence="2">
    <location>
        <position position="9"/>
    </location>
</feature>
<accession>P85424</accession>
<protein>
    <recommendedName>
        <fullName>Unknown protein 1</fullName>
    </recommendedName>
</protein>
<name>UP01_CYCRE</name>
<sequence length="9" mass="913">TDVLGLPAK</sequence>
<dbReference type="GO" id="GO:0005576">
    <property type="term" value="C:extracellular region"/>
    <property type="evidence" value="ECO:0007669"/>
    <property type="project" value="UniProtKB-KW"/>
</dbReference>
<evidence type="ECO:0000269" key="1">
    <source>
    </source>
</evidence>
<evidence type="ECO:0000303" key="2">
    <source>
    </source>
</evidence>
<evidence type="ECO:0000305" key="3"/>
<proteinExistence type="evidence at protein level"/>